<accession>P72979</accession>
<evidence type="ECO:0000255" key="1">
    <source>
        <dbReference type="PROSITE-ProRule" id="PRU00435"/>
    </source>
</evidence>
<sequence length="135" mass="15248">MEKVFPHTAMTQANADPCFETGHICPIQHVVDLLDNKWSILVLRELFKGQRRTGQLLDALPGCSTKTLTLRLRQLETHGIINRDVYPEIPPRVEYSLTARGREIQPVLIAMHKLGSDWLEQESCECSLLTGEGPN</sequence>
<organism>
    <name type="scientific">Synechocystis sp. (strain ATCC 27184 / PCC 6803 / Kazusa)</name>
    <dbReference type="NCBI Taxonomy" id="1111708"/>
    <lineage>
        <taxon>Bacteria</taxon>
        <taxon>Bacillati</taxon>
        <taxon>Cyanobacteriota</taxon>
        <taxon>Cyanophyceae</taxon>
        <taxon>Synechococcales</taxon>
        <taxon>Merismopediaceae</taxon>
        <taxon>Synechocystis</taxon>
    </lineage>
</organism>
<reference key="1">
    <citation type="submission" date="1997-10" db="EMBL/GenBank/DDBJ databases">
        <title>A photosensitive cyanobacterial mutant generated by insertional mutagenesis of orf334 homologous to liverwort chloroplast orf320.</title>
        <authorList>
            <person name="Lee K."/>
            <person name="Fukuzawa H."/>
            <person name="Ohyama K."/>
        </authorList>
    </citation>
    <scope>NUCLEOTIDE SEQUENCE [GENOMIC DNA]</scope>
</reference>
<reference key="2">
    <citation type="journal article" date="1996" name="DNA Res.">
        <title>Sequence analysis of the genome of the unicellular cyanobacterium Synechocystis sp. strain PCC6803. II. Sequence determination of the entire genome and assignment of potential protein-coding regions.</title>
        <authorList>
            <person name="Kaneko T."/>
            <person name="Sato S."/>
            <person name="Kotani H."/>
            <person name="Tanaka A."/>
            <person name="Asamizu E."/>
            <person name="Nakamura Y."/>
            <person name="Miyajima N."/>
            <person name="Hirosawa M."/>
            <person name="Sugiura M."/>
            <person name="Sasamoto S."/>
            <person name="Kimura T."/>
            <person name="Hosouchi T."/>
            <person name="Matsuno A."/>
            <person name="Muraki A."/>
            <person name="Nakazaki N."/>
            <person name="Naruo K."/>
            <person name="Okumura S."/>
            <person name="Shimpo S."/>
            <person name="Takeuchi C."/>
            <person name="Wada T."/>
            <person name="Watanabe A."/>
            <person name="Yamada M."/>
            <person name="Yasuda M."/>
            <person name="Tabata S."/>
        </authorList>
    </citation>
    <scope>NUCLEOTIDE SEQUENCE [LARGE SCALE GENOMIC DNA]</scope>
    <source>
        <strain>ATCC 27184 / PCC 6803 / Kazusa</strain>
    </source>
</reference>
<keyword id="KW-0238">DNA-binding</keyword>
<keyword id="KW-1185">Reference proteome</keyword>
<keyword id="KW-0804">Transcription</keyword>
<keyword id="KW-0805">Transcription regulation</keyword>
<feature type="chain" id="PRO_0000148892" description="Uncharacterized HTH-type transcriptional regulator sll1512">
    <location>
        <begin position="1"/>
        <end position="135"/>
    </location>
</feature>
<feature type="domain" description="HTH hxlR-type" evidence="1">
    <location>
        <begin position="25"/>
        <end position="123"/>
    </location>
</feature>
<name>Y1512_SYNY3</name>
<dbReference type="EMBL" id="D38599">
    <property type="protein sequence ID" value="BAA22776.1"/>
    <property type="molecule type" value="Genomic_DNA"/>
</dbReference>
<dbReference type="EMBL" id="BA000022">
    <property type="protein sequence ID" value="BAA16998.1"/>
    <property type="molecule type" value="Genomic_DNA"/>
</dbReference>
<dbReference type="PIR" id="S74958">
    <property type="entry name" value="S74958"/>
</dbReference>
<dbReference type="SMR" id="P72979"/>
<dbReference type="FunCoup" id="P72979">
    <property type="interactions" value="126"/>
</dbReference>
<dbReference type="IntAct" id="P72979">
    <property type="interactions" value="2"/>
</dbReference>
<dbReference type="STRING" id="1148.gene:10497859"/>
<dbReference type="PaxDb" id="1148-1652073"/>
<dbReference type="EnsemblBacteria" id="BAA16998">
    <property type="protein sequence ID" value="BAA16998"/>
    <property type="gene ID" value="BAA16998"/>
</dbReference>
<dbReference type="KEGG" id="syn:sll1512"/>
<dbReference type="eggNOG" id="COG1733">
    <property type="taxonomic scope" value="Bacteria"/>
</dbReference>
<dbReference type="InParanoid" id="P72979"/>
<dbReference type="PhylomeDB" id="P72979"/>
<dbReference type="Proteomes" id="UP000001425">
    <property type="component" value="Chromosome"/>
</dbReference>
<dbReference type="GO" id="GO:0032993">
    <property type="term" value="C:protein-DNA complex"/>
    <property type="evidence" value="ECO:0000318"/>
    <property type="project" value="GO_Central"/>
</dbReference>
<dbReference type="GO" id="GO:0003677">
    <property type="term" value="F:DNA binding"/>
    <property type="evidence" value="ECO:0007669"/>
    <property type="project" value="UniProtKB-KW"/>
</dbReference>
<dbReference type="GO" id="GO:0003700">
    <property type="term" value="F:DNA-binding transcription factor activity"/>
    <property type="evidence" value="ECO:0000318"/>
    <property type="project" value="GO_Central"/>
</dbReference>
<dbReference type="GO" id="GO:0006355">
    <property type="term" value="P:regulation of DNA-templated transcription"/>
    <property type="evidence" value="ECO:0000318"/>
    <property type="project" value="GO_Central"/>
</dbReference>
<dbReference type="Gene3D" id="1.10.10.10">
    <property type="entry name" value="Winged helix-like DNA-binding domain superfamily/Winged helix DNA-binding domain"/>
    <property type="match status" value="1"/>
</dbReference>
<dbReference type="InterPro" id="IPR002577">
    <property type="entry name" value="HTH_HxlR"/>
</dbReference>
<dbReference type="InterPro" id="IPR036388">
    <property type="entry name" value="WH-like_DNA-bd_sf"/>
</dbReference>
<dbReference type="InterPro" id="IPR036390">
    <property type="entry name" value="WH_DNA-bd_sf"/>
</dbReference>
<dbReference type="PANTHER" id="PTHR33204:SF37">
    <property type="entry name" value="HTH-TYPE TRANSCRIPTIONAL REGULATOR YODB"/>
    <property type="match status" value="1"/>
</dbReference>
<dbReference type="PANTHER" id="PTHR33204">
    <property type="entry name" value="TRANSCRIPTIONAL REGULATOR, MARR FAMILY"/>
    <property type="match status" value="1"/>
</dbReference>
<dbReference type="Pfam" id="PF01638">
    <property type="entry name" value="HxlR"/>
    <property type="match status" value="1"/>
</dbReference>
<dbReference type="SUPFAM" id="SSF46785">
    <property type="entry name" value="Winged helix' DNA-binding domain"/>
    <property type="match status" value="1"/>
</dbReference>
<dbReference type="PROSITE" id="PS51118">
    <property type="entry name" value="HTH_HXLR"/>
    <property type="match status" value="1"/>
</dbReference>
<protein>
    <recommendedName>
        <fullName>Uncharacterized HTH-type transcriptional regulator sll1512</fullName>
    </recommendedName>
</protein>
<proteinExistence type="predicted"/>
<gene>
    <name type="ordered locus">sll1512</name>
</gene>